<reference key="1">
    <citation type="journal article" date="1998" name="Science">
        <title>Genome sequence of the nematode C. elegans: a platform for investigating biology.</title>
        <authorList>
            <consortium name="The C. elegans sequencing consortium"/>
        </authorList>
    </citation>
    <scope>NUCLEOTIDE SEQUENCE [LARGE SCALE GENOMIC DNA]</scope>
    <source>
        <strain>Bristol N2</strain>
    </source>
</reference>
<gene>
    <name type="ORF">F59B10.5</name>
</gene>
<protein>
    <recommendedName>
        <fullName>Uncharacterized protein F59B10.5</fullName>
    </recommendedName>
</protein>
<keyword id="KW-1185">Reference proteome</keyword>
<keyword id="KW-0732">Signal</keyword>
<evidence type="ECO:0000255" key="1"/>
<feature type="signal peptide" evidence="1">
    <location>
        <begin position="1"/>
        <end position="15"/>
    </location>
</feature>
<feature type="chain" id="PRO_0000014288" description="Uncharacterized protein F59B10.5">
    <location>
        <begin position="16"/>
        <end position="96"/>
    </location>
</feature>
<organism>
    <name type="scientific">Caenorhabditis elegans</name>
    <dbReference type="NCBI Taxonomy" id="6239"/>
    <lineage>
        <taxon>Eukaryota</taxon>
        <taxon>Metazoa</taxon>
        <taxon>Ecdysozoa</taxon>
        <taxon>Nematoda</taxon>
        <taxon>Chromadorea</taxon>
        <taxon>Rhabditida</taxon>
        <taxon>Rhabditina</taxon>
        <taxon>Rhabditomorpha</taxon>
        <taxon>Rhabditoidea</taxon>
        <taxon>Rhabditidae</taxon>
        <taxon>Peloderinae</taxon>
        <taxon>Caenorhabditis</taxon>
    </lineage>
</organism>
<name>YSR5_CAEEL</name>
<dbReference type="EMBL" id="Z48716">
    <property type="protein sequence ID" value="CAA88599.1"/>
    <property type="molecule type" value="Genomic_DNA"/>
</dbReference>
<dbReference type="PIR" id="T22979">
    <property type="entry name" value="T22979"/>
</dbReference>
<dbReference type="RefSeq" id="NP_001366713.1">
    <property type="nucleotide sequence ID" value="NM_001381578.2"/>
</dbReference>
<dbReference type="RefSeq" id="NP_496266.1">
    <property type="nucleotide sequence ID" value="NM_063865.3"/>
</dbReference>
<dbReference type="FunCoup" id="Q09953">
    <property type="interactions" value="361"/>
</dbReference>
<dbReference type="PaxDb" id="6239-F59B10.5"/>
<dbReference type="PeptideAtlas" id="Q09953"/>
<dbReference type="EnsemblMetazoa" id="F59B10.5.1">
    <property type="protein sequence ID" value="F59B10.5.1"/>
    <property type="gene ID" value="WBGene00010321"/>
</dbReference>
<dbReference type="GeneID" id="186599"/>
<dbReference type="UCSC" id="F59B10.5">
    <property type="organism name" value="c. elegans"/>
</dbReference>
<dbReference type="AGR" id="WB:WBGene00010321"/>
<dbReference type="WormBase" id="F59B10.5">
    <property type="protein sequence ID" value="CE01594"/>
    <property type="gene ID" value="WBGene00010321"/>
</dbReference>
<dbReference type="eggNOG" id="ENOG502TIBA">
    <property type="taxonomic scope" value="Eukaryota"/>
</dbReference>
<dbReference type="HOGENOM" id="CLU_2361680_0_0_1"/>
<dbReference type="InParanoid" id="Q09953"/>
<dbReference type="OMA" id="PKYVPIM"/>
<dbReference type="OrthoDB" id="5797228at2759"/>
<dbReference type="PRO" id="PR:Q09953"/>
<dbReference type="Proteomes" id="UP000001940">
    <property type="component" value="Chromosome II"/>
</dbReference>
<dbReference type="Bgee" id="WBGene00010321">
    <property type="expression patterns" value="Expressed in larva and 3 other cell types or tissues"/>
</dbReference>
<sequence length="96" mass="11145">MRLFILLVALFVICACFDKFSLSKDKGTRANLKHPISRRVLRYERSVAYEDFPTPGEMTPKYVPIMDFAKVRPEIPSKTKHNSEFADADYQPDLDF</sequence>
<accession>Q09953</accession>
<proteinExistence type="inferred from homology"/>